<dbReference type="EMBL" id="CP000660">
    <property type="protein sequence ID" value="ABP51888.1"/>
    <property type="molecule type" value="Genomic_DNA"/>
</dbReference>
<dbReference type="RefSeq" id="WP_011901791.1">
    <property type="nucleotide sequence ID" value="NC_009376.1"/>
</dbReference>
<dbReference type="SMR" id="A4WNC1"/>
<dbReference type="STRING" id="340102.Pars_2345"/>
<dbReference type="GeneID" id="5056087"/>
<dbReference type="KEGG" id="pas:Pars_2345"/>
<dbReference type="HOGENOM" id="CLU_165896_1_0_2"/>
<dbReference type="OrthoDB" id="84643at2157"/>
<dbReference type="PhylomeDB" id="A4WNC1"/>
<dbReference type="Proteomes" id="UP000001567">
    <property type="component" value="Chromosome"/>
</dbReference>
<dbReference type="GO" id="GO:0003746">
    <property type="term" value="F:translation elongation factor activity"/>
    <property type="evidence" value="ECO:0007669"/>
    <property type="project" value="UniProtKB-UniRule"/>
</dbReference>
<dbReference type="CDD" id="cd00292">
    <property type="entry name" value="EF1B"/>
    <property type="match status" value="1"/>
</dbReference>
<dbReference type="Gene3D" id="3.30.70.60">
    <property type="match status" value="1"/>
</dbReference>
<dbReference type="HAMAP" id="MF_00043">
    <property type="entry name" value="EF1_beta"/>
    <property type="match status" value="1"/>
</dbReference>
<dbReference type="InterPro" id="IPR036219">
    <property type="entry name" value="eEF-1beta-like_sf"/>
</dbReference>
<dbReference type="InterPro" id="IPR014038">
    <property type="entry name" value="EF1B_bsu/dsu_GNE"/>
</dbReference>
<dbReference type="InterPro" id="IPR014717">
    <property type="entry name" value="Transl_elong_EF1B/ribsomal_bS6"/>
</dbReference>
<dbReference type="InterPro" id="IPR004542">
    <property type="entry name" value="Transl_elong_EF1B_B_arc"/>
</dbReference>
<dbReference type="NCBIfam" id="NF001670">
    <property type="entry name" value="PRK00435.1"/>
    <property type="match status" value="1"/>
</dbReference>
<dbReference type="PANTHER" id="PTHR39647">
    <property type="entry name" value="ELONGATION FACTOR 1-BETA"/>
    <property type="match status" value="1"/>
</dbReference>
<dbReference type="PANTHER" id="PTHR39647:SF1">
    <property type="entry name" value="ELONGATION FACTOR 1-BETA"/>
    <property type="match status" value="1"/>
</dbReference>
<dbReference type="Pfam" id="PF00736">
    <property type="entry name" value="EF1_GNE"/>
    <property type="match status" value="1"/>
</dbReference>
<dbReference type="PIRSF" id="PIRSF006521">
    <property type="entry name" value="Transl_elong_EF1B_B_arc"/>
    <property type="match status" value="1"/>
</dbReference>
<dbReference type="SMART" id="SM00888">
    <property type="entry name" value="EF1_GNE"/>
    <property type="match status" value="1"/>
</dbReference>
<dbReference type="SUPFAM" id="SSF54984">
    <property type="entry name" value="eEF-1beta-like"/>
    <property type="match status" value="1"/>
</dbReference>
<gene>
    <name evidence="1" type="primary">ef1b</name>
    <name type="ordered locus">Pars_2345</name>
</gene>
<evidence type="ECO:0000255" key="1">
    <source>
        <dbReference type="HAMAP-Rule" id="MF_00043"/>
    </source>
</evidence>
<accession>A4WNC1</accession>
<keyword id="KW-0251">Elongation factor</keyword>
<keyword id="KW-0648">Protein biosynthesis</keyword>
<comment type="function">
    <text evidence="1">Promotes the exchange of GDP for GTP in EF-1-alpha/GDP, thus allowing the regeneration of EF-1-alpha/GTP that could then be used to form the ternary complex EF-1-alpha/GTP/AAtRNA.</text>
</comment>
<comment type="similarity">
    <text evidence="1">Belongs to the EF-1-beta/EF-1-delta family.</text>
</comment>
<reference key="1">
    <citation type="submission" date="2007-04" db="EMBL/GenBank/DDBJ databases">
        <title>Complete sequence of Pyrobaculum arsenaticum DSM 13514.</title>
        <authorList>
            <consortium name="US DOE Joint Genome Institute"/>
            <person name="Copeland A."/>
            <person name="Lucas S."/>
            <person name="Lapidus A."/>
            <person name="Barry K."/>
            <person name="Glavina del Rio T."/>
            <person name="Dalin E."/>
            <person name="Tice H."/>
            <person name="Pitluck S."/>
            <person name="Chain P."/>
            <person name="Malfatti S."/>
            <person name="Shin M."/>
            <person name="Vergez L."/>
            <person name="Schmutz J."/>
            <person name="Larimer F."/>
            <person name="Land M."/>
            <person name="Hauser L."/>
            <person name="Kyrpides N."/>
            <person name="Mikhailova N."/>
            <person name="Cozen A.E."/>
            <person name="Fitz-Gibbon S.T."/>
            <person name="House C.H."/>
            <person name="Saltikov C."/>
            <person name="Lowe T.M."/>
            <person name="Richardson P."/>
        </authorList>
    </citation>
    <scope>NUCLEOTIDE SEQUENCE [LARGE SCALE GENOMIC DNA]</scope>
    <source>
        <strain>ATCC 700994 / DSM 13514 / JCM 11321 / PZ6</strain>
    </source>
</reference>
<protein>
    <recommendedName>
        <fullName evidence="1">Elongation factor 1-beta</fullName>
        <shortName evidence="1">EF-1-beta</shortName>
    </recommendedName>
    <alternativeName>
        <fullName evidence="1">aEF-1beta</fullName>
    </alternativeName>
</protein>
<organism>
    <name type="scientific">Pyrobaculum arsenaticum (strain DSM 13514 / JCM 11321 / PZ6)</name>
    <dbReference type="NCBI Taxonomy" id="340102"/>
    <lineage>
        <taxon>Archaea</taxon>
        <taxon>Thermoproteota</taxon>
        <taxon>Thermoprotei</taxon>
        <taxon>Thermoproteales</taxon>
        <taxon>Thermoproteaceae</taxon>
        <taxon>Pyrobaculum</taxon>
    </lineage>
</organism>
<feature type="chain" id="PRO_1000006620" description="Elongation factor 1-beta">
    <location>
        <begin position="1"/>
        <end position="92"/>
    </location>
</feature>
<name>EF1B_PYRAR</name>
<proteinExistence type="inferred from homology"/>
<sequence length="92" mass="10600">MSAEVALVYRVLPDSVEVNIDKLKTDIINKLSPKYKVDKVEVEEIGFGIKALRFYIRMPESEEYSSDEVEELLRSVEGVGGYELEYFSRLSF</sequence>